<comment type="function">
    <text evidence="1">Redox regulated molecular chaperone. Protects both thermally unfolding and oxidatively damaged proteins from irreversible aggregation. Plays an important role in the bacterial defense system toward oxidative stress.</text>
</comment>
<comment type="subcellular location">
    <subcellularLocation>
        <location evidence="1">Cytoplasm</location>
    </subcellularLocation>
</comment>
<comment type="PTM">
    <text evidence="1">Under oxidizing conditions two disulfide bonds are formed involving the reactive cysteines. Under reducing conditions zinc is bound to the reactive cysteines and the protein is inactive.</text>
</comment>
<comment type="similarity">
    <text evidence="1">Belongs to the HSP33 family.</text>
</comment>
<keyword id="KW-0143">Chaperone</keyword>
<keyword id="KW-0963">Cytoplasm</keyword>
<keyword id="KW-1015">Disulfide bond</keyword>
<keyword id="KW-0676">Redox-active center</keyword>
<keyword id="KW-0862">Zinc</keyword>
<accession>C3P9L3</accession>
<gene>
    <name evidence="1" type="primary">hslO</name>
    <name type="ordered locus">BAA_0079</name>
</gene>
<proteinExistence type="inferred from homology"/>
<protein>
    <recommendedName>
        <fullName evidence="1">33 kDa chaperonin</fullName>
    </recommendedName>
    <alternativeName>
        <fullName evidence="1">Heat shock protein 33 homolog</fullName>
        <shortName evidence="1">HSP33</shortName>
    </alternativeName>
</protein>
<sequence>MKDYLVKALAFDGEVRAYSVRTTNTVSEAQRRHDTWRTASAALGRSLTAGTMMGAMLKGDQKLTIKVEGNGPIGPILVDAHANGDVRGYVTNPHVDFEGTEQGKLRVYQAVGTEGFVTVIKDIGMREPFIGQSPIVSGELGEDFTYYFAVSEQTPSSVGVGVLVNGDDSILAAGGFILQIMPGAQEETISFIEERLQKIPPVSTLIEQGLSPEELLYAVLGEDKVKVLETMDVQFNCTCSRERIESVLISLGKTELEQVREEEEETEVHCHFCNERYKFSKEDITNLIENL</sequence>
<evidence type="ECO:0000255" key="1">
    <source>
        <dbReference type="HAMAP-Rule" id="MF_00117"/>
    </source>
</evidence>
<organism>
    <name type="scientific">Bacillus anthracis (strain A0248)</name>
    <dbReference type="NCBI Taxonomy" id="592021"/>
    <lineage>
        <taxon>Bacteria</taxon>
        <taxon>Bacillati</taxon>
        <taxon>Bacillota</taxon>
        <taxon>Bacilli</taxon>
        <taxon>Bacillales</taxon>
        <taxon>Bacillaceae</taxon>
        <taxon>Bacillus</taxon>
        <taxon>Bacillus cereus group</taxon>
    </lineage>
</organism>
<feature type="chain" id="PRO_1000119249" description="33 kDa chaperonin">
    <location>
        <begin position="1"/>
        <end position="291"/>
    </location>
</feature>
<feature type="disulfide bond" description="Redox-active" evidence="1">
    <location>
        <begin position="237"/>
        <end position="239"/>
    </location>
</feature>
<feature type="disulfide bond" description="Redox-active" evidence="1">
    <location>
        <begin position="270"/>
        <end position="273"/>
    </location>
</feature>
<reference key="1">
    <citation type="submission" date="2009-04" db="EMBL/GenBank/DDBJ databases">
        <title>Genome sequence of Bacillus anthracis A0248.</title>
        <authorList>
            <person name="Dodson R.J."/>
            <person name="Munk A.C."/>
            <person name="Bruce D."/>
            <person name="Detter C."/>
            <person name="Tapia R."/>
            <person name="Sutton G."/>
            <person name="Sims D."/>
            <person name="Brettin T."/>
        </authorList>
    </citation>
    <scope>NUCLEOTIDE SEQUENCE [LARGE SCALE GENOMIC DNA]</scope>
    <source>
        <strain>A0248</strain>
    </source>
</reference>
<name>HSLO_BACAA</name>
<dbReference type="EMBL" id="CP001598">
    <property type="protein sequence ID" value="ACQ48003.1"/>
    <property type="molecule type" value="Genomic_DNA"/>
</dbReference>
<dbReference type="RefSeq" id="WP_000656366.1">
    <property type="nucleotide sequence ID" value="NC_012659.1"/>
</dbReference>
<dbReference type="SMR" id="C3P9L3"/>
<dbReference type="GeneID" id="75083333"/>
<dbReference type="KEGG" id="bai:BAA_0079"/>
<dbReference type="HOGENOM" id="CLU_054493_1_0_9"/>
<dbReference type="GO" id="GO:0005737">
    <property type="term" value="C:cytoplasm"/>
    <property type="evidence" value="ECO:0007669"/>
    <property type="project" value="UniProtKB-SubCell"/>
</dbReference>
<dbReference type="GO" id="GO:0044183">
    <property type="term" value="F:protein folding chaperone"/>
    <property type="evidence" value="ECO:0007669"/>
    <property type="project" value="TreeGrafter"/>
</dbReference>
<dbReference type="GO" id="GO:0051082">
    <property type="term" value="F:unfolded protein binding"/>
    <property type="evidence" value="ECO:0007669"/>
    <property type="project" value="UniProtKB-UniRule"/>
</dbReference>
<dbReference type="GO" id="GO:0042026">
    <property type="term" value="P:protein refolding"/>
    <property type="evidence" value="ECO:0007669"/>
    <property type="project" value="TreeGrafter"/>
</dbReference>
<dbReference type="CDD" id="cd00498">
    <property type="entry name" value="Hsp33"/>
    <property type="match status" value="1"/>
</dbReference>
<dbReference type="Gene3D" id="3.55.30.10">
    <property type="entry name" value="Hsp33 domain"/>
    <property type="match status" value="1"/>
</dbReference>
<dbReference type="Gene3D" id="3.90.1280.10">
    <property type="entry name" value="HSP33 redox switch-like"/>
    <property type="match status" value="1"/>
</dbReference>
<dbReference type="HAMAP" id="MF_00117">
    <property type="entry name" value="HslO"/>
    <property type="match status" value="1"/>
</dbReference>
<dbReference type="InterPro" id="IPR000397">
    <property type="entry name" value="Heat_shock_Hsp33"/>
</dbReference>
<dbReference type="InterPro" id="IPR016154">
    <property type="entry name" value="Heat_shock_Hsp33_C"/>
</dbReference>
<dbReference type="InterPro" id="IPR016153">
    <property type="entry name" value="Heat_shock_Hsp33_N"/>
</dbReference>
<dbReference type="NCBIfam" id="NF001033">
    <property type="entry name" value="PRK00114.1"/>
    <property type="match status" value="1"/>
</dbReference>
<dbReference type="PANTHER" id="PTHR30111">
    <property type="entry name" value="33 KDA CHAPERONIN"/>
    <property type="match status" value="1"/>
</dbReference>
<dbReference type="PANTHER" id="PTHR30111:SF1">
    <property type="entry name" value="33 KDA CHAPERONIN"/>
    <property type="match status" value="1"/>
</dbReference>
<dbReference type="Pfam" id="PF01430">
    <property type="entry name" value="HSP33"/>
    <property type="match status" value="1"/>
</dbReference>
<dbReference type="PIRSF" id="PIRSF005261">
    <property type="entry name" value="Heat_shock_Hsp33"/>
    <property type="match status" value="1"/>
</dbReference>
<dbReference type="SUPFAM" id="SSF64397">
    <property type="entry name" value="Hsp33 domain"/>
    <property type="match status" value="1"/>
</dbReference>
<dbReference type="SUPFAM" id="SSF118352">
    <property type="entry name" value="HSP33 redox switch-like"/>
    <property type="match status" value="1"/>
</dbReference>